<sequence>MPKTQSAAGYKAGVKDYKLTYYTPDYTPKDTDLLAAFRFSPQPGVPADEAGAAIAAESSTGTWTTVWTDLLTDMDRYKGKCYHIEPVQGEENSYFAFIAYPLDLFEEGSVTNILTSIVGNVFGFKAIRSLRLEDIRFPVALVKTFQGPPHGIQVERDLLNKYGRPMLGCTIKPKLGLSAKNYGRAVYECLRGGLDFTKDDENINSQPFQRWRDRFLFVADAIHKSQAETGEIKGHYLNVTAPTCEEMMKRAEFAKELGMPIIMHDFLTAGFTANTTLAKWCRDNGVLLHIHRAMHAVIDRQRNHGIHFRVLAKCLRLSGGDHLHSGTVVGKLEGDKASTLGFVDLMREDHIEADRSRGVFFTQDWASMPGVLPVASGGIHVWHMPALVEIFGDDSVLQFGGGTLGHPWGNAPGATANRVALEACVQARNEGRDLYREGGDILREAGKWSPELAAALDLWKEIKFEFETMDKL</sequence>
<name>RBL_SYNP6</name>
<proteinExistence type="evidence at protein level"/>
<gene>
    <name type="primary">cbbL</name>
    <name type="synonym">rbcA</name>
    <name type="synonym">rbcL</name>
    <name type="ordered locus">syc0130_c</name>
</gene>
<feature type="chain" id="PRO_0000062651" description="Ribulose bisphosphate carboxylase large chain">
    <location>
        <begin position="1"/>
        <end position="472"/>
    </location>
</feature>
<feature type="short sequence motif" description="Interacts with RbcX2" evidence="4">
    <location>
        <begin position="461"/>
        <end position="467"/>
    </location>
</feature>
<feature type="active site" description="Proton acceptor">
    <location>
        <position position="172"/>
    </location>
</feature>
<feature type="active site" description="Proton acceptor">
    <location>
        <position position="291"/>
    </location>
</feature>
<feature type="binding site" description="in homodimeric partner">
    <location>
        <position position="120"/>
    </location>
    <ligand>
        <name>substrate</name>
    </ligand>
</feature>
<feature type="binding site">
    <location>
        <position position="170"/>
    </location>
    <ligand>
        <name>substrate</name>
    </ligand>
</feature>
<feature type="binding site">
    <location>
        <position position="174"/>
    </location>
    <ligand>
        <name>substrate</name>
    </ligand>
</feature>
<feature type="binding site" description="via carbamate group" evidence="8">
    <location>
        <position position="198"/>
    </location>
    <ligand>
        <name>Mg(2+)</name>
        <dbReference type="ChEBI" id="CHEBI:18420"/>
    </ligand>
</feature>
<feature type="binding site" evidence="8">
    <location>
        <position position="200"/>
    </location>
    <ligand>
        <name>Mg(2+)</name>
        <dbReference type="ChEBI" id="CHEBI:18420"/>
    </ligand>
</feature>
<feature type="binding site" evidence="8">
    <location>
        <position position="201"/>
    </location>
    <ligand>
        <name>Mg(2+)</name>
        <dbReference type="ChEBI" id="CHEBI:18420"/>
    </ligand>
</feature>
<feature type="binding site">
    <location>
        <position position="292"/>
    </location>
    <ligand>
        <name>substrate</name>
    </ligand>
</feature>
<feature type="binding site">
    <location>
        <position position="324"/>
    </location>
    <ligand>
        <name>substrate</name>
    </ligand>
</feature>
<feature type="binding site">
    <location>
        <position position="376"/>
    </location>
    <ligand>
        <name>substrate</name>
    </ligand>
</feature>
<feature type="site" description="Transition state stabilizer">
    <location>
        <position position="331"/>
    </location>
</feature>
<feature type="modified residue" description="N6-carboxylysine" evidence="3">
    <location>
        <position position="198"/>
    </location>
</feature>
<feature type="disulfide bond" description="Interchain; in linked form" evidence="8">
    <location>
        <position position="244"/>
    </location>
</feature>
<feature type="mutagenesis site" description="Does not form the RbcL8-(RbcX2)8 complex." evidence="6">
    <original>E</original>
    <variation>A</variation>
    <variation>C</variation>
    <location>
        <position position="49"/>
    </location>
</feature>
<feature type="mutagenesis site" description="Wild-type formation of the RbcL8-(RbcX2)8 complex." evidence="6">
    <original>A</original>
    <variation>H</variation>
    <location>
        <position position="53"/>
    </location>
</feature>
<feature type="mutagenesis site" description="Alters the RbcL-RbcS interface, RbcS cannot displace RbcX2 from assembly intermediate." evidence="6">
    <original>WTDLL</original>
    <variation>ATDGA</variation>
    <location>
        <begin position="67"/>
        <end position="71"/>
    </location>
</feature>
<feature type="mutagenesis site" description="Protein aggregates, forms RbcL2-RbcX(2)2 homodimer intermediate poorly." evidence="6">
    <original>E</original>
    <variation>Q</variation>
    <location>
        <position position="106"/>
    </location>
</feature>
<feature type="mutagenesis site" description="Reduced formation of the RbcL8-(RbcX2)8 complex." evidence="6">
    <original>A</original>
    <variation>Y</variation>
    <location>
        <position position="126"/>
    </location>
</feature>
<feature type="mutagenesis site" description="Forms stable homodimer in presence of RbcX2 but does not form RbcL8 form." evidence="6">
    <original>R</original>
    <variation>S</variation>
    <location>
        <position position="212"/>
    </location>
</feature>
<feature type="mutagenesis site" description="Remains bound to GroEL." evidence="5">
    <location>
        <begin position="461"/>
        <end position="472"/>
    </location>
</feature>
<feature type="mutagenesis site" description="Remains bound to GroEL." evidence="5">
    <original>F</original>
    <variation>A</variation>
    <location>
        <position position="464"/>
    </location>
</feature>
<feature type="mutagenesis site" description="Remains bound to GroEL." evidence="5">
    <original>F</original>
    <variation>A</variation>
    <location>
        <position position="466"/>
    </location>
</feature>
<feature type="sequence conflict" description="In Ref. 1; K00486." evidence="10" ref="1">
    <original>RF</original>
    <variation>PV</variation>
    <location>
        <begin position="38"/>
        <end position="39"/>
    </location>
</feature>
<feature type="sequence conflict" description="In Ref. 1; K00486." evidence="10" ref="1">
    <original>A</original>
    <variation>R</variation>
    <location>
        <position position="353"/>
    </location>
</feature>
<feature type="helix" evidence="18">
    <location>
        <begin position="18"/>
        <end position="21"/>
    </location>
</feature>
<feature type="strand" evidence="18">
    <location>
        <begin position="32"/>
        <end position="41"/>
    </location>
</feature>
<feature type="helix" evidence="18">
    <location>
        <begin position="47"/>
        <end position="57"/>
    </location>
</feature>
<feature type="turn" evidence="18">
    <location>
        <begin position="58"/>
        <end position="60"/>
    </location>
</feature>
<feature type="strand" evidence="18">
    <location>
        <begin position="63"/>
        <end position="65"/>
    </location>
</feature>
<feature type="helix" evidence="18">
    <location>
        <begin position="67"/>
        <end position="71"/>
    </location>
</feature>
<feature type="helix" evidence="18">
    <location>
        <begin position="74"/>
        <end position="77"/>
    </location>
</feature>
<feature type="strand" evidence="18">
    <location>
        <begin position="80"/>
        <end position="86"/>
    </location>
</feature>
<feature type="strand" evidence="18">
    <location>
        <begin position="94"/>
        <end position="100"/>
    </location>
</feature>
<feature type="helix" evidence="18">
    <location>
        <begin position="102"/>
        <end position="104"/>
    </location>
</feature>
<feature type="helix" evidence="18">
    <location>
        <begin position="110"/>
        <end position="118"/>
    </location>
</feature>
<feature type="helix" evidence="18">
    <location>
        <begin position="121"/>
        <end position="123"/>
    </location>
</feature>
<feature type="strand" evidence="18">
    <location>
        <begin position="127"/>
        <end position="136"/>
    </location>
</feature>
<feature type="helix" evidence="18">
    <location>
        <begin position="139"/>
        <end position="142"/>
    </location>
</feature>
<feature type="strand" evidence="21">
    <location>
        <begin position="148"/>
        <end position="150"/>
    </location>
</feature>
<feature type="helix" evidence="18">
    <location>
        <begin position="152"/>
        <end position="159"/>
    </location>
</feature>
<feature type="strand" evidence="18">
    <location>
        <begin position="166"/>
        <end position="168"/>
    </location>
</feature>
<feature type="strand" evidence="18">
    <location>
        <begin position="172"/>
        <end position="175"/>
    </location>
</feature>
<feature type="helix" evidence="18">
    <location>
        <begin position="179"/>
        <end position="191"/>
    </location>
</feature>
<feature type="strand" evidence="18">
    <location>
        <begin position="195"/>
        <end position="198"/>
    </location>
</feature>
<feature type="strand" evidence="18">
    <location>
        <begin position="204"/>
        <end position="206"/>
    </location>
</feature>
<feature type="helix" evidence="18">
    <location>
        <begin position="211"/>
        <end position="229"/>
    </location>
</feature>
<feature type="strand" evidence="18">
    <location>
        <begin position="234"/>
        <end position="238"/>
    </location>
</feature>
<feature type="helix" evidence="18">
    <location>
        <begin position="244"/>
        <end position="256"/>
    </location>
</feature>
<feature type="strand" evidence="18">
    <location>
        <begin position="260"/>
        <end position="265"/>
    </location>
</feature>
<feature type="helix" evidence="18">
    <location>
        <begin position="266"/>
        <end position="269"/>
    </location>
</feature>
<feature type="helix" evidence="18">
    <location>
        <begin position="271"/>
        <end position="284"/>
    </location>
</feature>
<feature type="strand" evidence="18">
    <location>
        <begin position="287"/>
        <end position="291"/>
    </location>
</feature>
<feature type="helix" evidence="18">
    <location>
        <begin position="295"/>
        <end position="299"/>
    </location>
</feature>
<feature type="strand" evidence="18">
    <location>
        <begin position="302"/>
        <end position="306"/>
    </location>
</feature>
<feature type="helix" evidence="18">
    <location>
        <begin position="308"/>
        <end position="318"/>
    </location>
</feature>
<feature type="strand" evidence="18">
    <location>
        <begin position="321"/>
        <end position="324"/>
    </location>
</feature>
<feature type="strand" evidence="18">
    <location>
        <begin position="328"/>
        <end position="332"/>
    </location>
</feature>
<feature type="turn" evidence="20">
    <location>
        <begin position="333"/>
        <end position="335"/>
    </location>
</feature>
<feature type="helix" evidence="18">
    <location>
        <begin position="336"/>
        <end position="347"/>
    </location>
</feature>
<feature type="strand" evidence="18">
    <location>
        <begin position="349"/>
        <end position="351"/>
    </location>
</feature>
<feature type="helix" evidence="18">
    <location>
        <begin position="355"/>
        <end position="357"/>
    </location>
</feature>
<feature type="strand" evidence="18">
    <location>
        <begin position="372"/>
        <end position="378"/>
    </location>
</feature>
<feature type="helix" evidence="18">
    <location>
        <begin position="381"/>
        <end position="383"/>
    </location>
</feature>
<feature type="helix" evidence="18">
    <location>
        <begin position="384"/>
        <end position="391"/>
    </location>
</feature>
<feature type="strand" evidence="18">
    <location>
        <begin position="396"/>
        <end position="398"/>
    </location>
</feature>
<feature type="helix" evidence="18">
    <location>
        <begin position="401"/>
        <end position="404"/>
    </location>
</feature>
<feature type="helix" evidence="18">
    <location>
        <begin position="410"/>
        <end position="430"/>
    </location>
</feature>
<feature type="helix" evidence="18">
    <location>
        <begin position="434"/>
        <end position="448"/>
    </location>
</feature>
<feature type="helix" evidence="18">
    <location>
        <begin position="450"/>
        <end position="459"/>
    </location>
</feature>
<feature type="strand" evidence="19">
    <location>
        <begin position="465"/>
        <end position="467"/>
    </location>
</feature>
<accession>P00880</accession>
<dbReference type="EC" id="4.1.1.39" evidence="7 9"/>
<dbReference type="EMBL" id="K00486">
    <property type="status" value="NOT_ANNOTATED_CDS"/>
    <property type="molecule type" value="Genomic_DNA"/>
</dbReference>
<dbReference type="EMBL" id="X03220">
    <property type="protein sequence ID" value="CAA26972.1"/>
    <property type="molecule type" value="Genomic_DNA"/>
</dbReference>
<dbReference type="EMBL" id="AP008231">
    <property type="protein sequence ID" value="BAD78320.1"/>
    <property type="molecule type" value="Genomic_DNA"/>
</dbReference>
<dbReference type="PIR" id="A90941">
    <property type="entry name" value="RKYCL"/>
</dbReference>
<dbReference type="RefSeq" id="WP_011242444.1">
    <property type="nucleotide sequence ID" value="NZ_CP085785.1"/>
</dbReference>
<dbReference type="PDB" id="1RBL">
    <property type="method" value="X-ray"/>
    <property type="resolution" value="2.20 A"/>
    <property type="chains" value="A/B/C/D/E/F/G/H=6-472"/>
</dbReference>
<dbReference type="PDB" id="1RSC">
    <property type="method" value="X-ray"/>
    <property type="resolution" value="2.30 A"/>
    <property type="chains" value="A/B/C/D/E/F/G/H=1-472"/>
</dbReference>
<dbReference type="PDB" id="2WVW">
    <property type="method" value="EM"/>
    <property type="resolution" value="9.00 A"/>
    <property type="chains" value="A/B/C/D/E/F/G/H=1-472"/>
</dbReference>
<dbReference type="PDB" id="3RG6">
    <property type="method" value="X-ray"/>
    <property type="resolution" value="3.20 A"/>
    <property type="chains" value="A/B=1-472"/>
</dbReference>
<dbReference type="PDB" id="8ILB">
    <property type="method" value="EM"/>
    <property type="resolution" value="3.00 A"/>
    <property type="chains" value="A/B/C/D/J/K/L/M=1-472"/>
</dbReference>
<dbReference type="PDB" id="8ILM">
    <property type="method" value="EM"/>
    <property type="resolution" value="3.30 A"/>
    <property type="chains" value="A/B/F/G/H/I/J/K=1-472"/>
</dbReference>
<dbReference type="PDB" id="8IO2">
    <property type="method" value="EM"/>
    <property type="resolution" value="3.10 A"/>
    <property type="chains" value="A/B/C/D/E/F/G/H=2-472"/>
</dbReference>
<dbReference type="PDB" id="8IOJ">
    <property type="method" value="EM"/>
    <property type="resolution" value="4.10 A"/>
    <property type="chains" value="A/B/C/D/H/I/J/K=1-472"/>
</dbReference>
<dbReference type="PDB" id="8IOL">
    <property type="method" value="EM"/>
    <property type="resolution" value="2.90 A"/>
    <property type="chains" value="A/B/C/D/E/F/G/H=1-472"/>
</dbReference>
<dbReference type="PDBsum" id="1RBL"/>
<dbReference type="PDBsum" id="1RSC"/>
<dbReference type="PDBsum" id="2WVW"/>
<dbReference type="PDBsum" id="3RG6"/>
<dbReference type="PDBsum" id="8ILB"/>
<dbReference type="PDBsum" id="8ILM"/>
<dbReference type="PDBsum" id="8IO2"/>
<dbReference type="PDBsum" id="8IOJ"/>
<dbReference type="PDBsum" id="8IOL"/>
<dbReference type="EMDB" id="EMD-35532"/>
<dbReference type="EMDB" id="EMD-35536"/>
<dbReference type="EMDB" id="EMD-35605"/>
<dbReference type="EMDB" id="EMD-35620"/>
<dbReference type="EMDB" id="EMD-35621"/>
<dbReference type="SMR" id="P00880"/>
<dbReference type="DIP" id="DIP-6210N"/>
<dbReference type="IntAct" id="P00880">
    <property type="interactions" value="2"/>
</dbReference>
<dbReference type="KEGG" id="syc:syc0130_c"/>
<dbReference type="eggNOG" id="COG1850">
    <property type="taxonomic scope" value="Bacteria"/>
</dbReference>
<dbReference type="SABIO-RK" id="P00880"/>
<dbReference type="CD-CODE" id="29B486D9">
    <property type="entry name" value="Synthetic Condensate 000221"/>
</dbReference>
<dbReference type="CD-CODE" id="6EF1C41E">
    <property type="entry name" value="Synthetic Condensate 000225"/>
</dbReference>
<dbReference type="EvolutionaryTrace" id="P00880"/>
<dbReference type="Proteomes" id="UP000001175">
    <property type="component" value="Chromosome"/>
</dbReference>
<dbReference type="GO" id="GO:0031470">
    <property type="term" value="C:carboxysome"/>
    <property type="evidence" value="ECO:0007669"/>
    <property type="project" value="UniProtKB-SubCell"/>
</dbReference>
<dbReference type="GO" id="GO:0000287">
    <property type="term" value="F:magnesium ion binding"/>
    <property type="evidence" value="ECO:0007669"/>
    <property type="project" value="UniProtKB-UniRule"/>
</dbReference>
<dbReference type="GO" id="GO:0004497">
    <property type="term" value="F:monooxygenase activity"/>
    <property type="evidence" value="ECO:0007669"/>
    <property type="project" value="UniProtKB-KW"/>
</dbReference>
<dbReference type="GO" id="GO:0016984">
    <property type="term" value="F:ribulose-bisphosphate carboxylase activity"/>
    <property type="evidence" value="ECO:0007669"/>
    <property type="project" value="UniProtKB-UniRule"/>
</dbReference>
<dbReference type="GO" id="GO:0009853">
    <property type="term" value="P:photorespiration"/>
    <property type="evidence" value="ECO:0007669"/>
    <property type="project" value="UniProtKB-KW"/>
</dbReference>
<dbReference type="GO" id="GO:0019253">
    <property type="term" value="P:reductive pentose-phosphate cycle"/>
    <property type="evidence" value="ECO:0007669"/>
    <property type="project" value="UniProtKB-UniRule"/>
</dbReference>
<dbReference type="CDD" id="cd08212">
    <property type="entry name" value="RuBisCO_large_I"/>
    <property type="match status" value="1"/>
</dbReference>
<dbReference type="DisProt" id="DP02960"/>
<dbReference type="Gene3D" id="3.20.20.110">
    <property type="entry name" value="Ribulose bisphosphate carboxylase, large subunit, C-terminal domain"/>
    <property type="match status" value="1"/>
</dbReference>
<dbReference type="Gene3D" id="3.30.70.150">
    <property type="entry name" value="RuBisCO large subunit, N-terminal domain"/>
    <property type="match status" value="1"/>
</dbReference>
<dbReference type="HAMAP" id="MF_01338">
    <property type="entry name" value="RuBisCO_L_type1"/>
    <property type="match status" value="1"/>
</dbReference>
<dbReference type="InterPro" id="IPR033966">
    <property type="entry name" value="RuBisCO"/>
</dbReference>
<dbReference type="InterPro" id="IPR020878">
    <property type="entry name" value="RuBisCo_large_chain_AS"/>
</dbReference>
<dbReference type="InterPro" id="IPR000685">
    <property type="entry name" value="RuBisCO_lsu_C"/>
</dbReference>
<dbReference type="InterPro" id="IPR036376">
    <property type="entry name" value="RuBisCO_lsu_C_sf"/>
</dbReference>
<dbReference type="InterPro" id="IPR017443">
    <property type="entry name" value="RuBisCO_lsu_fd_N"/>
</dbReference>
<dbReference type="InterPro" id="IPR036422">
    <property type="entry name" value="RuBisCO_lsu_N_sf"/>
</dbReference>
<dbReference type="InterPro" id="IPR020888">
    <property type="entry name" value="RuBisCO_lsuI"/>
</dbReference>
<dbReference type="NCBIfam" id="NF003252">
    <property type="entry name" value="PRK04208.1"/>
    <property type="match status" value="1"/>
</dbReference>
<dbReference type="PANTHER" id="PTHR42704">
    <property type="entry name" value="RIBULOSE BISPHOSPHATE CARBOXYLASE"/>
    <property type="match status" value="1"/>
</dbReference>
<dbReference type="PANTHER" id="PTHR42704:SF17">
    <property type="entry name" value="RIBULOSE BISPHOSPHATE CARBOXYLASE LARGE CHAIN"/>
    <property type="match status" value="1"/>
</dbReference>
<dbReference type="Pfam" id="PF00016">
    <property type="entry name" value="RuBisCO_large"/>
    <property type="match status" value="1"/>
</dbReference>
<dbReference type="Pfam" id="PF02788">
    <property type="entry name" value="RuBisCO_large_N"/>
    <property type="match status" value="1"/>
</dbReference>
<dbReference type="SFLD" id="SFLDG01052">
    <property type="entry name" value="RuBisCO"/>
    <property type="match status" value="1"/>
</dbReference>
<dbReference type="SFLD" id="SFLDS00014">
    <property type="entry name" value="RuBisCO"/>
    <property type="match status" value="1"/>
</dbReference>
<dbReference type="SFLD" id="SFLDG00301">
    <property type="entry name" value="RuBisCO-like_proteins"/>
    <property type="match status" value="1"/>
</dbReference>
<dbReference type="SUPFAM" id="SSF51649">
    <property type="entry name" value="RuBisCo, C-terminal domain"/>
    <property type="match status" value="1"/>
</dbReference>
<dbReference type="SUPFAM" id="SSF54966">
    <property type="entry name" value="RuBisCO, large subunit, small (N-terminal) domain"/>
    <property type="match status" value="1"/>
</dbReference>
<dbReference type="PROSITE" id="PS00157">
    <property type="entry name" value="RUBISCO_LARGE"/>
    <property type="match status" value="1"/>
</dbReference>
<evidence type="ECO:0000250" key="1">
    <source>
        <dbReference type="UniProtKB" id="Q31NB3"/>
    </source>
</evidence>
<evidence type="ECO:0000255" key="2">
    <source>
        <dbReference type="HAMAP-Rule" id="MF_01338"/>
    </source>
</evidence>
<evidence type="ECO:0000269" key="3">
    <source>
    </source>
</evidence>
<evidence type="ECO:0000269" key="4">
    <source>
    </source>
</evidence>
<evidence type="ECO:0000269" key="5">
    <source>
    </source>
</evidence>
<evidence type="ECO:0000269" key="6">
    <source>
    </source>
</evidence>
<evidence type="ECO:0000269" key="7">
    <source>
    </source>
</evidence>
<evidence type="ECO:0000269" key="8">
    <source>
    </source>
</evidence>
<evidence type="ECO:0000269" key="9">
    <source>
    </source>
</evidence>
<evidence type="ECO:0000305" key="10"/>
<evidence type="ECO:0000305" key="11">
    <source>
    </source>
</evidence>
<evidence type="ECO:0000305" key="12">
    <source>
    </source>
</evidence>
<evidence type="ECO:0000305" key="13">
    <source>
    </source>
</evidence>
<evidence type="ECO:0000305" key="14">
    <source>
    </source>
</evidence>
<evidence type="ECO:0007744" key="15">
    <source>
        <dbReference type="PDB" id="1RSC"/>
    </source>
</evidence>
<evidence type="ECO:0007744" key="16">
    <source>
        <dbReference type="PDB" id="2WVW"/>
    </source>
</evidence>
<evidence type="ECO:0007744" key="17">
    <source>
        <dbReference type="PDB" id="3RG6"/>
    </source>
</evidence>
<evidence type="ECO:0007829" key="18">
    <source>
        <dbReference type="PDB" id="1RBL"/>
    </source>
</evidence>
<evidence type="ECO:0007829" key="19">
    <source>
        <dbReference type="PDB" id="8ILB"/>
    </source>
</evidence>
<evidence type="ECO:0007829" key="20">
    <source>
        <dbReference type="PDB" id="8ILM"/>
    </source>
</evidence>
<evidence type="ECO:0007829" key="21">
    <source>
        <dbReference type="PDB" id="8IOL"/>
    </source>
</evidence>
<organism>
    <name type="scientific">Synechococcus sp. (strain ATCC 27144 / PCC 6301 / SAUG 1402/1)</name>
    <name type="common">Anacystis nidulans</name>
    <dbReference type="NCBI Taxonomy" id="269084"/>
    <lineage>
        <taxon>Bacteria</taxon>
        <taxon>Bacillati</taxon>
        <taxon>Cyanobacteriota</taxon>
        <taxon>Cyanophyceae</taxon>
        <taxon>Synechococcales</taxon>
        <taxon>Synechococcaceae</taxon>
        <taxon>Synechococcus</taxon>
    </lineage>
</organism>
<keyword id="KW-0002">3D-structure</keyword>
<keyword id="KW-1283">Bacterial microcompartment</keyword>
<keyword id="KW-0113">Calvin cycle</keyword>
<keyword id="KW-0120">Carbon dioxide fixation</keyword>
<keyword id="KW-1282">Carboxysome</keyword>
<keyword id="KW-0903">Direct protein sequencing</keyword>
<keyword id="KW-1015">Disulfide bond</keyword>
<keyword id="KW-0456">Lyase</keyword>
<keyword id="KW-0460">Magnesium</keyword>
<keyword id="KW-0479">Metal-binding</keyword>
<keyword id="KW-0503">Monooxygenase</keyword>
<keyword id="KW-0560">Oxidoreductase</keyword>
<keyword id="KW-0601">Photorespiration</keyword>
<keyword id="KW-0602">Photosynthesis</keyword>
<comment type="function">
    <text evidence="7 9">RuBisCO catalyzes two reactions: the carboxylation of D-ribulose 1,5-bisphosphate, the primary event in carbon dioxide fixation, as well as the oxidative fragmentation of the pentose substrate in the photorespiration process. Both reactions occur simultaneously and in competition at the same active site.</text>
</comment>
<comment type="catalytic activity">
    <reaction evidence="7 9">
        <text>2 (2R)-3-phosphoglycerate + 2 H(+) = D-ribulose 1,5-bisphosphate + CO2 + H2O</text>
        <dbReference type="Rhea" id="RHEA:23124"/>
        <dbReference type="ChEBI" id="CHEBI:15377"/>
        <dbReference type="ChEBI" id="CHEBI:15378"/>
        <dbReference type="ChEBI" id="CHEBI:16526"/>
        <dbReference type="ChEBI" id="CHEBI:57870"/>
        <dbReference type="ChEBI" id="CHEBI:58272"/>
        <dbReference type="EC" id="4.1.1.39"/>
    </reaction>
</comment>
<comment type="catalytic activity">
    <reaction evidence="9">
        <text>D-ribulose 1,5-bisphosphate + O2 = 2-phosphoglycolate + (2R)-3-phosphoglycerate + 2 H(+)</text>
        <dbReference type="Rhea" id="RHEA:36631"/>
        <dbReference type="ChEBI" id="CHEBI:15378"/>
        <dbReference type="ChEBI" id="CHEBI:15379"/>
        <dbReference type="ChEBI" id="CHEBI:57870"/>
        <dbReference type="ChEBI" id="CHEBI:58033"/>
        <dbReference type="ChEBI" id="CHEBI:58272"/>
    </reaction>
</comment>
<comment type="cofactor">
    <cofactor evidence="8">
        <name>Mg(2+)</name>
        <dbReference type="ChEBI" id="CHEBI:18420"/>
    </cofactor>
    <text evidence="8">Binds 1 Mg(2+) ion per subunit.</text>
</comment>
<comment type="biophysicochemical properties">
    <kinetics>
        <KM evidence="9">39 uM for ribulose 1,5-bisphosphate</KM>
        <KM evidence="9">173 uM for CO(2)</KM>
        <Vmax evidence="9">2.5 umol/min/mg enzyme with CO(2) as substrate</Vmax>
        <text>The CO(2)/O(2) specificity factor (tau) is 39.</text>
    </kinetics>
</comment>
<comment type="subunit">
    <text evidence="4 5 6 7 8 11 12 14">Heterohexadecamer of 8 large chains and 8 small chains (PubMed:9882445, PubMed:17574029, PubMed:7922027); disulfide-linked (PubMed:8245022). The disulfide link is formed within the large subunit homodimers (Probable) (PubMed:17574029, PubMed:7922027, PubMed:8245022). The exposed C-terminus binds in a cleft in the RbcX2 (shown with endogenous and Anabaena strain CA protein) (PubMed:20075914, PubMed:21765418). RbcX2 is displaced by RbcS; as RbcX2 is removed RbcS mediates the ordering of an internal RbcL loop (Thr-64-Leu-70) in a catalytically active conformation (Probable) (PubMed:17574029, PubMed:21765418).</text>
</comment>
<comment type="interaction">
    <interactant intactId="EBI-9023246">
        <id>P00880</id>
    </interactant>
    <interactant intactId="EBI-15936812">
        <id>A0A0H3K9R3</id>
        <label>rbcX</label>
    </interactant>
    <organismsDiffer>false</organismsDiffer>
    <experiments>3</experiments>
</comment>
<comment type="interaction">
    <interactant intactId="EBI-9023246">
        <id>P00880</id>
    </interactant>
    <interactant intactId="EBI-9023244">
        <id>Q44212</id>
        <label>rbcX</label>
    </interactant>
    <organismsDiffer>true</organismsDiffer>
    <experiments>3</experiments>
</comment>
<comment type="subcellular location">
    <subcellularLocation>
        <location evidence="2">Carboxysome</location>
    </subcellularLocation>
    <text evidence="1 10">In the carboxysome RuBisCO is organized into a paracrystalline array (By similarity). This cyanobacterium makes beta-type carboxysomes (Probable).</text>
</comment>
<comment type="domain">
    <text evidence="6 11">Binding of RbcS probably induces a conformation change that displaces RbcX2 and triggers the final mature conformation.</text>
</comment>
<comment type="PTM">
    <text evidence="13">The disulfide bond which can form in the large chain dimeric partners within the hexadecamer appears to be associated with oxidative stress and protein turnover.</text>
</comment>
<comment type="miscellaneous">
    <text evidence="4 6 11 12">RuBisCO folding and assembly commences when the nascent large subunit folds with the help of the chaperonin GroEL-GroES. Monomers require chaperone RbcX2 to assemble into RbcL8 octamers yielding RbcL8-(RbcX2)8 (Probable) (PubMed:17574029). RbcX2 is displaced by RbcS; as RbcX2 is removed RbcS mediates the ordering of an internal RbcL loop (Thr-64-Leu-70) in a catalytically active conformation (Probable) (PubMed:17574029, PubMed:21765418).</text>
</comment>
<comment type="miscellaneous">
    <text evidence="8">The basic functional RuBisCO is composed of a large chain homodimer in a 'head-to-tail' conformation. In form I RuBisCO this homodimer is arranged in a barrel-like tetramer with the small subunits forming a tetrameric 'cap' on each end of the 'barrel'.</text>
</comment>
<comment type="similarity">
    <text evidence="10">Belongs to the RuBisCO large chain family. Type I subfamily.</text>
</comment>
<protein>
    <recommendedName>
        <fullName>Ribulose bisphosphate carboxylase large chain</fullName>
        <shortName>RuBisCO large subunit</shortName>
        <ecNumber evidence="7 9">4.1.1.39</ecNumber>
    </recommendedName>
</protein>
<reference key="1">
    <citation type="journal article" date="1983" name="DNA">
        <title>The nucleotide sequence for the large subunit of ribulose 1,5-bisphosphate carboxylase from a unicellular cyanobacterium, Synechococcus PCC6301.</title>
        <authorList>
            <person name="Reichelt B.Y."/>
            <person name="Delaney S.F."/>
        </authorList>
    </citation>
    <scope>NUCLEOTIDE SEQUENCE [GENOMIC DNA]</scope>
</reference>
<reference key="2">
    <citation type="journal article" date="1983" name="Proc. Natl. Acad. Sci. U.S.A.">
        <title>Molecular cloning and sequence analysis of the cyanobacterial gene for the large subunit of ribulose-1,5-bisphosphate carboxylase/oxygenase.</title>
        <authorList>
            <person name="Shinozaki K."/>
            <person name="Yamada C."/>
            <person name="Takahata N."/>
            <person name="Sugiura M."/>
        </authorList>
    </citation>
    <scope>NUCLEOTIDE SEQUENCE [GENOMIC DNA]</scope>
    <scope>CARBOXYLATION AT LYS-198</scope>
</reference>
<reference key="3">
    <citation type="journal article" date="1985" name="Mol. Gen. Genet.">
        <title>Genes for the large and small subunits of ribulose-1,5-bisphosphate carboxylase/oxygenase constitute a single operon in a cyanobacterium Anacystis nidulans 6301.</title>
        <authorList>
            <person name="Shinozaki K."/>
            <person name="Sugiura M."/>
        </authorList>
    </citation>
    <scope>NUCLEOTIDE SEQUENCE [GENOMIC DNA]</scope>
</reference>
<reference key="4">
    <citation type="journal article" date="2007" name="Photosyn. Res.">
        <title>Complete nucleotide sequence of the freshwater unicellular cyanobacterium Synechococcus elongatus PCC 6301 chromosome: gene content and organization.</title>
        <authorList>
            <person name="Sugita C."/>
            <person name="Ogata K."/>
            <person name="Shikata M."/>
            <person name="Jikuya H."/>
            <person name="Takano J."/>
            <person name="Furumichi M."/>
            <person name="Kanehisa M."/>
            <person name="Omata T."/>
            <person name="Sugiura M."/>
            <person name="Sugita M."/>
        </authorList>
    </citation>
    <scope>NUCLEOTIDE SEQUENCE [LARGE SCALE GENOMIC DNA]</scope>
    <source>
        <strain>ATCC 27144 / PCC 6301 / SAUG 1402/1</strain>
    </source>
</reference>
<reference key="5">
    <citation type="journal article" date="1994" name="Arch. Biochem. Biophys.">
        <title>High substrate specificity factor ribulose bisphosphate carboxylase/oxygenase from eukaryotic marine algae and properties of recombinant cyanobacterial RubiSCO containing 'algal' residue modifications.</title>
        <authorList>
            <person name="Read B.A."/>
            <person name="Tabita F.R."/>
        </authorList>
    </citation>
    <scope>PROTEIN SEQUENCE OF 333-342</scope>
</reference>
<reference key="6">
    <citation type="journal article" date="1999" name="Arch. Biochem. Biophys.">
        <title>Closely related form I ribulose bisphosphate carboxylase/oxygenase molecules that possess different CO2/O2 substrate specificities.</title>
        <authorList>
            <person name="Horken K.M."/>
            <person name="Tabita F.R."/>
        </authorList>
    </citation>
    <scope>FUNCTION</scope>
    <scope>CATALYTIC ACTIVITY</scope>
    <scope>BIOPHYSICOCHEMICAL PROPERTIES</scope>
</reference>
<reference key="7">
    <citation type="journal article" date="2007" name="Cell">
        <title>Structure and function of RbcX, an assembly chaperone for hexadecameric Rubisco.</title>
        <authorList>
            <person name="Saschenbrecker S."/>
            <person name="Bracher A."/>
            <person name="Rao K.V."/>
            <person name="Rao B.V."/>
            <person name="Hartl F.U."/>
            <person name="Hayer-Hartl M."/>
        </authorList>
    </citation>
    <scope>RUBISCO FOLDING AND ASSEMBLY</scope>
    <scope>SUBUNIT</scope>
    <source>
        <strain>ATCC 27144 / PCC 6301 / SAUG 1402/1</strain>
    </source>
</reference>
<reference key="8">
    <citation type="journal article" date="1993" name="J. Biol. Chem.">
        <title>The X-ray structure of Synechococcus ribulose-bisphosphate carboxylase/oxygenase-activated quaternary complex at 2.2-A resolution.</title>
        <authorList>
            <person name="Newman J."/>
            <person name="Gutteridge S."/>
        </authorList>
    </citation>
    <scope>X-RAY CRYSTALLOGRAPHY (2.2 ANGSTROMS) OF 6-472 OF ACTIVATED HOLOENZYME IN COMPLEX WITH TRANSITION-STATE ANALOG 2-CABP AND MAGNESIUM</scope>
    <scope>SUBUNIT</scope>
    <scope>DISULFIDE BOND</scope>
</reference>
<reference evidence="15" key="9">
    <citation type="journal article" date="1994" name="Structure">
        <title>Structure of an effector-induced inactivated state of ribulose 1,5-bisphosphate carboxylase/oxygenase: the binary complex between enzyme and xylulose 1,5-bisphosphate.</title>
        <authorList>
            <person name="Newman J."/>
            <person name="Gutteridge S."/>
        </authorList>
    </citation>
    <scope>X-RAY CRYSTALLOGRAPHY (2.3 ANGSTROMS) OF INACTIVATED HOLOENZYME IN COMPLEX WITH PRODUCT ANALOG</scope>
    <scope>FUNCTION</scope>
    <scope>CATALYTIC ACTIVITY</scope>
    <scope>SUBUNIT</scope>
</reference>
<reference evidence="16" key="10">
    <citation type="journal article" date="2010" name="Nature">
        <title>Coupled chaperone action in folding and assembly of hexadecameric Rubisco.</title>
        <authorList>
            <person name="Liu C."/>
            <person name="Young A.L."/>
            <person name="Starling-Windhof A."/>
            <person name="Bracher A."/>
            <person name="Saschenbrecker S."/>
            <person name="Rao B.V."/>
            <person name="Rao K.V."/>
            <person name="Berninghausen O."/>
            <person name="Mielke T."/>
            <person name="Hartl F.U."/>
            <person name="Beckmann R."/>
            <person name="Hayer-Hartl M."/>
        </authorList>
    </citation>
    <scope>STRUCTURE BY ELECTRON MICROSCOPY (9.00 ANGSTROMS) IN COMPLEX WITH ANABAENA RBCX2</scope>
    <scope>RUBISCO FOLDING AND ASSEMBLY</scope>
    <scope>SUBUNIT</scope>
    <scope>DOMAIN</scope>
    <scope>MUTAGENESIS OF 461-GLU--LEU-472; PHE-464 AND PHE-466</scope>
    <source>
        <strain>ATCC 27144 / PCC 6301 / SAUG 1402/1</strain>
    </source>
</reference>
<reference evidence="17" key="11">
    <citation type="journal article" date="2011" name="Nat. Struct. Mol. Biol.">
        <title>Crystal structure of a chaperone-bound assembly intermediate of form I Rubisco.</title>
        <authorList>
            <person name="Bracher A."/>
            <person name="Starling-Windhof A."/>
            <person name="Hartl F.U."/>
            <person name="Hayer-Hartl M."/>
        </authorList>
    </citation>
    <scope>X-RAY CRYSTALLOGRAPHY (3.20 ANGSTROMS) IN COMPLEX WITH ANABAENA RBCX2</scope>
    <scope>RUBISCO FOLDING AND ASSEMBLY</scope>
    <scope>SUBUNIT</scope>
    <scope>MUTAGENESIS OF GLU-49; ALA-53; 67-TRP--LEU-71; GLU-106; ALA-126 AND ARG-212</scope>
    <source>
        <strain>ATCC 27144 / PCC 6301 / SAUG 1402/1</strain>
    </source>
</reference>